<reference key="1">
    <citation type="journal article" date="2002" name="Proc. Natl. Acad. Sci. U.S.A.">
        <title>Complete genome sequence and comparative genomic analysis of an emerging human pathogen, serotype V Streptococcus agalactiae.</title>
        <authorList>
            <person name="Tettelin H."/>
            <person name="Masignani V."/>
            <person name="Cieslewicz M.J."/>
            <person name="Eisen J.A."/>
            <person name="Peterson S.N."/>
            <person name="Wessels M.R."/>
            <person name="Paulsen I.T."/>
            <person name="Nelson K.E."/>
            <person name="Margarit I."/>
            <person name="Read T.D."/>
            <person name="Madoff L.C."/>
            <person name="Wolf A.M."/>
            <person name="Beanan M.J."/>
            <person name="Brinkac L.M."/>
            <person name="Daugherty S.C."/>
            <person name="DeBoy R.T."/>
            <person name="Durkin A.S."/>
            <person name="Kolonay J.F."/>
            <person name="Madupu R."/>
            <person name="Lewis M.R."/>
            <person name="Radune D."/>
            <person name="Fedorova N.B."/>
            <person name="Scanlan D."/>
            <person name="Khouri H.M."/>
            <person name="Mulligan S."/>
            <person name="Carty H.A."/>
            <person name="Cline R.T."/>
            <person name="Van Aken S.E."/>
            <person name="Gill J."/>
            <person name="Scarselli M."/>
            <person name="Mora M."/>
            <person name="Iacobini E.T."/>
            <person name="Brettoni C."/>
            <person name="Galli G."/>
            <person name="Mariani M."/>
            <person name="Vegni F."/>
            <person name="Maione D."/>
            <person name="Rinaudo D."/>
            <person name="Rappuoli R."/>
            <person name="Telford J.L."/>
            <person name="Kasper D.L."/>
            <person name="Grandi G."/>
            <person name="Fraser C.M."/>
        </authorList>
    </citation>
    <scope>NUCLEOTIDE SEQUENCE [LARGE SCALE GENOMIC DNA]</scope>
    <source>
        <strain>ATCC BAA-611 / 2603 V/R</strain>
    </source>
</reference>
<name>ENGB_STRA5</name>
<evidence type="ECO:0000255" key="1">
    <source>
        <dbReference type="HAMAP-Rule" id="MF_00321"/>
    </source>
</evidence>
<sequence>MAEEFLNTHNASILLSAANKSHYPQDDLPEVALAGRSNVGKSSFINTLLGRKNLARTSSKPGKTQLLNFYNIDDKLRFVDVPGYGYAKVSKTERAKWGKMIEEYLVTRDNLRVVVSLVDFRHDPSADDIQMYEFLKYYEIPVIIVATKADKIPRGKWNKHESSIKKKLNFDKKDHFIVFSSVDRTGLDESWDTILSEL</sequence>
<accession>Q8DZ11</accession>
<keyword id="KW-0131">Cell cycle</keyword>
<keyword id="KW-0132">Cell division</keyword>
<keyword id="KW-0342">GTP-binding</keyword>
<keyword id="KW-0460">Magnesium</keyword>
<keyword id="KW-0479">Metal-binding</keyword>
<keyword id="KW-0547">Nucleotide-binding</keyword>
<keyword id="KW-1185">Reference proteome</keyword>
<keyword id="KW-0717">Septation</keyword>
<comment type="function">
    <text evidence="1">Necessary for normal cell division and for the maintenance of normal septation.</text>
</comment>
<comment type="cofactor">
    <cofactor evidence="1">
        <name>Mg(2+)</name>
        <dbReference type="ChEBI" id="CHEBI:18420"/>
    </cofactor>
</comment>
<comment type="similarity">
    <text evidence="1">Belongs to the TRAFAC class TrmE-Era-EngA-EngB-Septin-like GTPase superfamily. EngB GTPase family.</text>
</comment>
<feature type="chain" id="PRO_0000266962" description="Probable GTP-binding protein EngB">
    <location>
        <begin position="1"/>
        <end position="198"/>
    </location>
</feature>
<feature type="domain" description="EngB-type G" evidence="1">
    <location>
        <begin position="27"/>
        <end position="198"/>
    </location>
</feature>
<feature type="binding site" evidence="1">
    <location>
        <begin position="35"/>
        <end position="42"/>
    </location>
    <ligand>
        <name>GTP</name>
        <dbReference type="ChEBI" id="CHEBI:37565"/>
    </ligand>
</feature>
<feature type="binding site" evidence="1">
    <location>
        <position position="42"/>
    </location>
    <ligand>
        <name>Mg(2+)</name>
        <dbReference type="ChEBI" id="CHEBI:18420"/>
    </ligand>
</feature>
<feature type="binding site" evidence="1">
    <location>
        <begin position="62"/>
        <end position="66"/>
    </location>
    <ligand>
        <name>GTP</name>
        <dbReference type="ChEBI" id="CHEBI:37565"/>
    </ligand>
</feature>
<feature type="binding site" evidence="1">
    <location>
        <position position="64"/>
    </location>
    <ligand>
        <name>Mg(2+)</name>
        <dbReference type="ChEBI" id="CHEBI:18420"/>
    </ligand>
</feature>
<feature type="binding site" evidence="1">
    <location>
        <begin position="80"/>
        <end position="83"/>
    </location>
    <ligand>
        <name>GTP</name>
        <dbReference type="ChEBI" id="CHEBI:37565"/>
    </ligand>
</feature>
<feature type="binding site" evidence="1">
    <location>
        <begin position="147"/>
        <end position="150"/>
    </location>
    <ligand>
        <name>GTP</name>
        <dbReference type="ChEBI" id="CHEBI:37565"/>
    </ligand>
</feature>
<feature type="binding site" evidence="1">
    <location>
        <begin position="179"/>
        <end position="181"/>
    </location>
    <ligand>
        <name>GTP</name>
        <dbReference type="ChEBI" id="CHEBI:37565"/>
    </ligand>
</feature>
<proteinExistence type="inferred from homology"/>
<gene>
    <name evidence="1" type="primary">engB</name>
    <name type="ordered locus">SAG1311</name>
</gene>
<organism>
    <name type="scientific">Streptococcus agalactiae serotype V (strain ATCC BAA-611 / 2603 V/R)</name>
    <dbReference type="NCBI Taxonomy" id="208435"/>
    <lineage>
        <taxon>Bacteria</taxon>
        <taxon>Bacillati</taxon>
        <taxon>Bacillota</taxon>
        <taxon>Bacilli</taxon>
        <taxon>Lactobacillales</taxon>
        <taxon>Streptococcaceae</taxon>
        <taxon>Streptococcus</taxon>
    </lineage>
</organism>
<protein>
    <recommendedName>
        <fullName evidence="1">Probable GTP-binding protein EngB</fullName>
    </recommendedName>
</protein>
<dbReference type="EMBL" id="AE009948">
    <property type="protein sequence ID" value="AAN00182.1"/>
    <property type="molecule type" value="Genomic_DNA"/>
</dbReference>
<dbReference type="RefSeq" id="NP_688309.1">
    <property type="nucleotide sequence ID" value="NC_004116.1"/>
</dbReference>
<dbReference type="SMR" id="Q8DZ11"/>
<dbReference type="STRING" id="208435.SAG1311"/>
<dbReference type="KEGG" id="sag:SAG1311"/>
<dbReference type="PATRIC" id="fig|208435.3.peg.1319"/>
<dbReference type="HOGENOM" id="CLU_033732_3_0_9"/>
<dbReference type="OrthoDB" id="9804921at2"/>
<dbReference type="Proteomes" id="UP000000821">
    <property type="component" value="Chromosome"/>
</dbReference>
<dbReference type="GO" id="GO:0005829">
    <property type="term" value="C:cytosol"/>
    <property type="evidence" value="ECO:0007669"/>
    <property type="project" value="TreeGrafter"/>
</dbReference>
<dbReference type="GO" id="GO:0005525">
    <property type="term" value="F:GTP binding"/>
    <property type="evidence" value="ECO:0007669"/>
    <property type="project" value="UniProtKB-UniRule"/>
</dbReference>
<dbReference type="GO" id="GO:0046872">
    <property type="term" value="F:metal ion binding"/>
    <property type="evidence" value="ECO:0007669"/>
    <property type="project" value="UniProtKB-KW"/>
</dbReference>
<dbReference type="GO" id="GO:0000917">
    <property type="term" value="P:division septum assembly"/>
    <property type="evidence" value="ECO:0007669"/>
    <property type="project" value="UniProtKB-KW"/>
</dbReference>
<dbReference type="CDD" id="cd01876">
    <property type="entry name" value="YihA_EngB"/>
    <property type="match status" value="1"/>
</dbReference>
<dbReference type="FunFam" id="3.40.50.300:FF:000098">
    <property type="entry name" value="Probable GTP-binding protein EngB"/>
    <property type="match status" value="1"/>
</dbReference>
<dbReference type="Gene3D" id="3.40.50.300">
    <property type="entry name" value="P-loop containing nucleotide triphosphate hydrolases"/>
    <property type="match status" value="1"/>
</dbReference>
<dbReference type="HAMAP" id="MF_00321">
    <property type="entry name" value="GTPase_EngB"/>
    <property type="match status" value="1"/>
</dbReference>
<dbReference type="InterPro" id="IPR030393">
    <property type="entry name" value="G_ENGB_dom"/>
</dbReference>
<dbReference type="InterPro" id="IPR006073">
    <property type="entry name" value="GTP-bd"/>
</dbReference>
<dbReference type="InterPro" id="IPR019987">
    <property type="entry name" value="GTP-bd_ribosome_bio_YsxC"/>
</dbReference>
<dbReference type="InterPro" id="IPR027417">
    <property type="entry name" value="P-loop_NTPase"/>
</dbReference>
<dbReference type="InterPro" id="IPR005225">
    <property type="entry name" value="Small_GTP-bd"/>
</dbReference>
<dbReference type="NCBIfam" id="TIGR03598">
    <property type="entry name" value="GTPase_YsxC"/>
    <property type="match status" value="1"/>
</dbReference>
<dbReference type="NCBIfam" id="TIGR00231">
    <property type="entry name" value="small_GTP"/>
    <property type="match status" value="1"/>
</dbReference>
<dbReference type="PANTHER" id="PTHR11649:SF13">
    <property type="entry name" value="ENGB-TYPE G DOMAIN-CONTAINING PROTEIN"/>
    <property type="match status" value="1"/>
</dbReference>
<dbReference type="PANTHER" id="PTHR11649">
    <property type="entry name" value="MSS1/TRME-RELATED GTP-BINDING PROTEIN"/>
    <property type="match status" value="1"/>
</dbReference>
<dbReference type="Pfam" id="PF01926">
    <property type="entry name" value="MMR_HSR1"/>
    <property type="match status" value="1"/>
</dbReference>
<dbReference type="SUPFAM" id="SSF52540">
    <property type="entry name" value="P-loop containing nucleoside triphosphate hydrolases"/>
    <property type="match status" value="1"/>
</dbReference>
<dbReference type="PROSITE" id="PS51706">
    <property type="entry name" value="G_ENGB"/>
    <property type="match status" value="1"/>
</dbReference>